<accession>Q5GWU9</accession>
<evidence type="ECO:0000255" key="1">
    <source>
        <dbReference type="HAMAP-Rule" id="MF_01365"/>
    </source>
</evidence>
<evidence type="ECO:0000305" key="2"/>
<protein>
    <recommendedName>
        <fullName evidence="1">Large ribosomal subunit protein uL6</fullName>
    </recommendedName>
    <alternativeName>
        <fullName evidence="2">50S ribosomal protein L6</fullName>
    </alternativeName>
</protein>
<name>RL6_XANOR</name>
<feature type="chain" id="PRO_0000260978" description="Large ribosomal subunit protein uL6">
    <location>
        <begin position="1"/>
        <end position="175"/>
    </location>
</feature>
<reference key="1">
    <citation type="journal article" date="2005" name="Nucleic Acids Res.">
        <title>The genome sequence of Xanthomonas oryzae pathovar oryzae KACC10331, the bacterial blight pathogen of rice.</title>
        <authorList>
            <person name="Lee B.-M."/>
            <person name="Park Y.-J."/>
            <person name="Park D.-S."/>
            <person name="Kang H.-W."/>
            <person name="Kim J.-G."/>
            <person name="Song E.-S."/>
            <person name="Park I.-C."/>
            <person name="Yoon U.-H."/>
            <person name="Hahn J.-H."/>
            <person name="Koo B.-S."/>
            <person name="Lee G.-B."/>
            <person name="Kim H."/>
            <person name="Park H.-S."/>
            <person name="Yoon K.-O."/>
            <person name="Kim J.-H."/>
            <person name="Jung C.-H."/>
            <person name="Koh N.-H."/>
            <person name="Seo J.-S."/>
            <person name="Go S.-J."/>
        </authorList>
    </citation>
    <scope>NUCLEOTIDE SEQUENCE [LARGE SCALE GENOMIC DNA]</scope>
    <source>
        <strain>KACC10331 / KXO85</strain>
    </source>
</reference>
<organism>
    <name type="scientific">Xanthomonas oryzae pv. oryzae (strain KACC10331 / KXO85)</name>
    <dbReference type="NCBI Taxonomy" id="291331"/>
    <lineage>
        <taxon>Bacteria</taxon>
        <taxon>Pseudomonadati</taxon>
        <taxon>Pseudomonadota</taxon>
        <taxon>Gammaproteobacteria</taxon>
        <taxon>Lysobacterales</taxon>
        <taxon>Lysobacteraceae</taxon>
        <taxon>Xanthomonas</taxon>
    </lineage>
</organism>
<dbReference type="EMBL" id="AE013598">
    <property type="protein sequence ID" value="AAW76822.1"/>
    <property type="molecule type" value="Genomic_DNA"/>
</dbReference>
<dbReference type="SMR" id="Q5GWU9"/>
<dbReference type="STRING" id="291331.XOO3568"/>
<dbReference type="KEGG" id="xoo:XOO3568"/>
<dbReference type="HOGENOM" id="CLU_065464_1_2_6"/>
<dbReference type="Proteomes" id="UP000006735">
    <property type="component" value="Chromosome"/>
</dbReference>
<dbReference type="GO" id="GO:0022625">
    <property type="term" value="C:cytosolic large ribosomal subunit"/>
    <property type="evidence" value="ECO:0007669"/>
    <property type="project" value="TreeGrafter"/>
</dbReference>
<dbReference type="GO" id="GO:0019843">
    <property type="term" value="F:rRNA binding"/>
    <property type="evidence" value="ECO:0007669"/>
    <property type="project" value="UniProtKB-UniRule"/>
</dbReference>
<dbReference type="GO" id="GO:0003735">
    <property type="term" value="F:structural constituent of ribosome"/>
    <property type="evidence" value="ECO:0007669"/>
    <property type="project" value="InterPro"/>
</dbReference>
<dbReference type="GO" id="GO:0002181">
    <property type="term" value="P:cytoplasmic translation"/>
    <property type="evidence" value="ECO:0007669"/>
    <property type="project" value="TreeGrafter"/>
</dbReference>
<dbReference type="FunFam" id="3.90.930.12:FF:000001">
    <property type="entry name" value="50S ribosomal protein L6"/>
    <property type="match status" value="1"/>
</dbReference>
<dbReference type="Gene3D" id="3.90.930.12">
    <property type="entry name" value="Ribosomal protein L6, alpha-beta domain"/>
    <property type="match status" value="2"/>
</dbReference>
<dbReference type="HAMAP" id="MF_01365_B">
    <property type="entry name" value="Ribosomal_uL6_B"/>
    <property type="match status" value="1"/>
</dbReference>
<dbReference type="InterPro" id="IPR000702">
    <property type="entry name" value="Ribosomal_uL6-like"/>
</dbReference>
<dbReference type="InterPro" id="IPR036789">
    <property type="entry name" value="Ribosomal_uL6-like_a/b-dom_sf"/>
</dbReference>
<dbReference type="InterPro" id="IPR020040">
    <property type="entry name" value="Ribosomal_uL6_a/b-dom"/>
</dbReference>
<dbReference type="InterPro" id="IPR019906">
    <property type="entry name" value="Ribosomal_uL6_bac-type"/>
</dbReference>
<dbReference type="InterPro" id="IPR002358">
    <property type="entry name" value="Ribosomal_uL6_CS"/>
</dbReference>
<dbReference type="NCBIfam" id="TIGR03654">
    <property type="entry name" value="L6_bact"/>
    <property type="match status" value="1"/>
</dbReference>
<dbReference type="PANTHER" id="PTHR11655">
    <property type="entry name" value="60S/50S RIBOSOMAL PROTEIN L6/L9"/>
    <property type="match status" value="1"/>
</dbReference>
<dbReference type="PANTHER" id="PTHR11655:SF14">
    <property type="entry name" value="LARGE RIBOSOMAL SUBUNIT PROTEIN UL6M"/>
    <property type="match status" value="1"/>
</dbReference>
<dbReference type="Pfam" id="PF00347">
    <property type="entry name" value="Ribosomal_L6"/>
    <property type="match status" value="2"/>
</dbReference>
<dbReference type="PIRSF" id="PIRSF002162">
    <property type="entry name" value="Ribosomal_L6"/>
    <property type="match status" value="1"/>
</dbReference>
<dbReference type="PRINTS" id="PR00059">
    <property type="entry name" value="RIBOSOMALL6"/>
</dbReference>
<dbReference type="SUPFAM" id="SSF56053">
    <property type="entry name" value="Ribosomal protein L6"/>
    <property type="match status" value="2"/>
</dbReference>
<dbReference type="PROSITE" id="PS00525">
    <property type="entry name" value="RIBOSOMAL_L6_1"/>
    <property type="match status" value="1"/>
</dbReference>
<proteinExistence type="inferred from homology"/>
<keyword id="KW-1185">Reference proteome</keyword>
<keyword id="KW-0687">Ribonucleoprotein</keyword>
<keyword id="KW-0689">Ribosomal protein</keyword>
<keyword id="KW-0694">RNA-binding</keyword>
<keyword id="KW-0699">rRNA-binding</keyword>
<comment type="function">
    <text evidence="1">This protein binds to the 23S rRNA, and is important in its secondary structure. It is located near the subunit interface in the base of the L7/L12 stalk, and near the tRNA binding site of the peptidyltransferase center.</text>
</comment>
<comment type="subunit">
    <text evidence="1">Part of the 50S ribosomal subunit.</text>
</comment>
<comment type="similarity">
    <text evidence="1">Belongs to the universal ribosomal protein uL6 family.</text>
</comment>
<sequence length="175" mass="18443">MSRVAKKPVSLPKGVELNVQSELVSVKGPKGTLTLPKPTGVEIAIDGDVATLSANDPSQIAITGTVRAILANMVKGVSEGFERKLELVGVGYRAAMQGKDLSLALGFSHPLVFVAPEGITLSTPTQTEILVQGADKQRVGEVAAKIRGFRPPEPYKGKGVKYAGEVIIRKEAKKA</sequence>
<gene>
    <name evidence="1" type="primary">rplF</name>
    <name type="ordered locus">XOO3568</name>
</gene>